<proteinExistence type="inferred from homology"/>
<reference key="1">
    <citation type="journal article" date="2002" name="Nucleic Acids Res.">
        <title>Genome sequence of Shigella flexneri 2a: insights into pathogenicity through comparison with genomes of Escherichia coli K12 and O157.</title>
        <authorList>
            <person name="Jin Q."/>
            <person name="Yuan Z."/>
            <person name="Xu J."/>
            <person name="Wang Y."/>
            <person name="Shen Y."/>
            <person name="Lu W."/>
            <person name="Wang J."/>
            <person name="Liu H."/>
            <person name="Yang J."/>
            <person name="Yang F."/>
            <person name="Zhang X."/>
            <person name="Zhang J."/>
            <person name="Yang G."/>
            <person name="Wu H."/>
            <person name="Qu D."/>
            <person name="Dong J."/>
            <person name="Sun L."/>
            <person name="Xue Y."/>
            <person name="Zhao A."/>
            <person name="Gao Y."/>
            <person name="Zhu J."/>
            <person name="Kan B."/>
            <person name="Ding K."/>
            <person name="Chen S."/>
            <person name="Cheng H."/>
            <person name="Yao Z."/>
            <person name="He B."/>
            <person name="Chen R."/>
            <person name="Ma D."/>
            <person name="Qiang B."/>
            <person name="Wen Y."/>
            <person name="Hou Y."/>
            <person name="Yu J."/>
        </authorList>
    </citation>
    <scope>NUCLEOTIDE SEQUENCE [LARGE SCALE GENOMIC DNA]</scope>
    <source>
        <strain>301 / Serotype 2a</strain>
    </source>
</reference>
<reference key="2">
    <citation type="journal article" date="2003" name="Infect. Immun.">
        <title>Complete genome sequence and comparative genomics of Shigella flexneri serotype 2a strain 2457T.</title>
        <authorList>
            <person name="Wei J."/>
            <person name="Goldberg M.B."/>
            <person name="Burland V."/>
            <person name="Venkatesan M.M."/>
            <person name="Deng W."/>
            <person name="Fournier G."/>
            <person name="Mayhew G.F."/>
            <person name="Plunkett G. III"/>
            <person name="Rose D.J."/>
            <person name="Darling A."/>
            <person name="Mau B."/>
            <person name="Perna N.T."/>
            <person name="Payne S.M."/>
            <person name="Runyen-Janecky L.J."/>
            <person name="Zhou S."/>
            <person name="Schwartz D.C."/>
            <person name="Blattner F.R."/>
        </authorList>
    </citation>
    <scope>NUCLEOTIDE SEQUENCE [LARGE SCALE GENOMIC DNA]</scope>
    <source>
        <strain>ATCC 700930 / 2457T / Serotype 2a</strain>
    </source>
</reference>
<organism>
    <name type="scientific">Shigella flexneri</name>
    <dbReference type="NCBI Taxonomy" id="623"/>
    <lineage>
        <taxon>Bacteria</taxon>
        <taxon>Pseudomonadati</taxon>
        <taxon>Pseudomonadota</taxon>
        <taxon>Gammaproteobacteria</taxon>
        <taxon>Enterobacterales</taxon>
        <taxon>Enterobacteriaceae</taxon>
        <taxon>Shigella</taxon>
    </lineage>
</organism>
<dbReference type="EC" id="1.7.1.7" evidence="1"/>
<dbReference type="EMBL" id="AE005674">
    <property type="protein sequence ID" value="AAN41766.1"/>
    <property type="molecule type" value="Genomic_DNA"/>
</dbReference>
<dbReference type="EMBL" id="AE014073">
    <property type="protein sequence ID" value="AAP15647.1"/>
    <property type="molecule type" value="Genomic_DNA"/>
</dbReference>
<dbReference type="RefSeq" id="NP_706059.1">
    <property type="nucleotide sequence ID" value="NC_004337.2"/>
</dbReference>
<dbReference type="RefSeq" id="WP_001217323.1">
    <property type="nucleotide sequence ID" value="NZ_WPGW01000007.1"/>
</dbReference>
<dbReference type="SMR" id="Q83SM9"/>
<dbReference type="STRING" id="198214.SF0101"/>
<dbReference type="PaxDb" id="198214-SF0101"/>
<dbReference type="GeneID" id="1024535"/>
<dbReference type="KEGG" id="sfl:SF0101"/>
<dbReference type="KEGG" id="sfx:S0103"/>
<dbReference type="PATRIC" id="fig|198214.7.peg.115"/>
<dbReference type="HOGENOM" id="CLU_022552_5_3_6"/>
<dbReference type="Proteomes" id="UP000001006">
    <property type="component" value="Chromosome"/>
</dbReference>
<dbReference type="Proteomes" id="UP000002673">
    <property type="component" value="Chromosome"/>
</dbReference>
<dbReference type="GO" id="GO:0005829">
    <property type="term" value="C:cytosol"/>
    <property type="evidence" value="ECO:0007669"/>
    <property type="project" value="TreeGrafter"/>
</dbReference>
<dbReference type="GO" id="GO:1902560">
    <property type="term" value="C:GMP reductase complex"/>
    <property type="evidence" value="ECO:0007669"/>
    <property type="project" value="InterPro"/>
</dbReference>
<dbReference type="GO" id="GO:0003920">
    <property type="term" value="F:GMP reductase activity"/>
    <property type="evidence" value="ECO:0007669"/>
    <property type="project" value="UniProtKB-UniRule"/>
</dbReference>
<dbReference type="GO" id="GO:0046872">
    <property type="term" value="F:metal ion binding"/>
    <property type="evidence" value="ECO:0007669"/>
    <property type="project" value="UniProtKB-KW"/>
</dbReference>
<dbReference type="GO" id="GO:0006163">
    <property type="term" value="P:purine nucleotide metabolic process"/>
    <property type="evidence" value="ECO:0007669"/>
    <property type="project" value="UniProtKB-UniRule"/>
</dbReference>
<dbReference type="CDD" id="cd00381">
    <property type="entry name" value="IMPDH"/>
    <property type="match status" value="1"/>
</dbReference>
<dbReference type="FunFam" id="3.20.20.70:FF:000012">
    <property type="entry name" value="GMP reductase"/>
    <property type="match status" value="1"/>
</dbReference>
<dbReference type="Gene3D" id="3.20.20.70">
    <property type="entry name" value="Aldolase class I"/>
    <property type="match status" value="1"/>
</dbReference>
<dbReference type="HAMAP" id="MF_00596">
    <property type="entry name" value="GMP_reduct_type1"/>
    <property type="match status" value="1"/>
</dbReference>
<dbReference type="InterPro" id="IPR013785">
    <property type="entry name" value="Aldolase_TIM"/>
</dbReference>
<dbReference type="InterPro" id="IPR050139">
    <property type="entry name" value="GMP_reductase"/>
</dbReference>
<dbReference type="InterPro" id="IPR005993">
    <property type="entry name" value="GMPR"/>
</dbReference>
<dbReference type="InterPro" id="IPR015875">
    <property type="entry name" value="IMP_DH/GMP_Rdtase_CS"/>
</dbReference>
<dbReference type="InterPro" id="IPR001093">
    <property type="entry name" value="IMP_DH_GMPRt"/>
</dbReference>
<dbReference type="NCBIfam" id="TIGR01305">
    <property type="entry name" value="GMP_reduct_1"/>
    <property type="match status" value="1"/>
</dbReference>
<dbReference type="NCBIfam" id="NF003470">
    <property type="entry name" value="PRK05096.1"/>
    <property type="match status" value="1"/>
</dbReference>
<dbReference type="PANTHER" id="PTHR43170">
    <property type="entry name" value="GMP REDUCTASE"/>
    <property type="match status" value="1"/>
</dbReference>
<dbReference type="PANTHER" id="PTHR43170:SF5">
    <property type="entry name" value="GMP REDUCTASE"/>
    <property type="match status" value="1"/>
</dbReference>
<dbReference type="Pfam" id="PF00478">
    <property type="entry name" value="IMPDH"/>
    <property type="match status" value="1"/>
</dbReference>
<dbReference type="PIRSF" id="PIRSF000235">
    <property type="entry name" value="GMP_reductase"/>
    <property type="match status" value="1"/>
</dbReference>
<dbReference type="SMART" id="SM01240">
    <property type="entry name" value="IMPDH"/>
    <property type="match status" value="1"/>
</dbReference>
<dbReference type="SUPFAM" id="SSF51412">
    <property type="entry name" value="Inosine monophosphate dehydrogenase (IMPDH)"/>
    <property type="match status" value="1"/>
</dbReference>
<dbReference type="PROSITE" id="PS00487">
    <property type="entry name" value="IMP_DH_GMP_RED"/>
    <property type="match status" value="1"/>
</dbReference>
<protein>
    <recommendedName>
        <fullName evidence="1">GMP reductase</fullName>
        <ecNumber evidence="1">1.7.1.7</ecNumber>
    </recommendedName>
    <alternativeName>
        <fullName evidence="1">Guanosine 5'-monophosphate oxidoreductase</fullName>
        <shortName evidence="1">Guanosine monophosphate reductase</shortName>
    </alternativeName>
</protein>
<feature type="chain" id="PRO_0000093740" description="GMP reductase">
    <location>
        <begin position="1"/>
        <end position="347"/>
    </location>
</feature>
<feature type="active site" description="Thioimidate intermediate" evidence="1">
    <location>
        <position position="186"/>
    </location>
</feature>
<feature type="binding site" evidence="1">
    <location>
        <begin position="108"/>
        <end position="131"/>
    </location>
    <ligand>
        <name>NADP(+)</name>
        <dbReference type="ChEBI" id="CHEBI:58349"/>
    </ligand>
</feature>
<feature type="binding site" evidence="1">
    <location>
        <position position="181"/>
    </location>
    <ligand>
        <name>K(+)</name>
        <dbReference type="ChEBI" id="CHEBI:29103"/>
    </ligand>
</feature>
<feature type="binding site" evidence="1">
    <location>
        <position position="183"/>
    </location>
    <ligand>
        <name>K(+)</name>
        <dbReference type="ChEBI" id="CHEBI:29103"/>
    </ligand>
</feature>
<feature type="binding site" evidence="1">
    <location>
        <begin position="216"/>
        <end position="239"/>
    </location>
    <ligand>
        <name>NADP(+)</name>
        <dbReference type="ChEBI" id="CHEBI:58349"/>
    </ligand>
</feature>
<evidence type="ECO:0000255" key="1">
    <source>
        <dbReference type="HAMAP-Rule" id="MF_00596"/>
    </source>
</evidence>
<name>GUAC_SHIFL</name>
<sequence length="347" mass="37384">MRIEEDLKLGFKDVLIRPKRSTLKSRSDVELERQFTFKHSGQSWSGVPIIAANMDTVGTFSMASALASFDILTAVHKHFSVEEWQAFINNSSADVLKHVMVSTGTSDADFEKTKQILDLNPALNFVCIDVANGYSEHFVQFVAKAREAWPTKTICAGNVVTGEMCEELILSGADIVKVGIGPGSVCTTRVKTGVGYPQLSAVIECADAAHGLGGMIVSDGGCTTPGDVAKAFGGGADFVMLGGMLAGHEESGGRIVEENGEKFMLFYGMSSESAMKRHVGGVAEYRAAEGKTVKLPLRGQVENTARDILGGLRSACTYVGASRLKELTKRTTFIRVLEQENRIFNNL</sequence>
<gene>
    <name evidence="1" type="primary">guaC</name>
    <name type="ordered locus">SF0101</name>
    <name type="ordered locus">S0103</name>
</gene>
<keyword id="KW-0479">Metal-binding</keyword>
<keyword id="KW-0521">NADP</keyword>
<keyword id="KW-0560">Oxidoreductase</keyword>
<keyword id="KW-0630">Potassium</keyword>
<keyword id="KW-1185">Reference proteome</keyword>
<accession>Q83SM9</accession>
<comment type="function">
    <text evidence="1">Catalyzes the irreversible NADPH-dependent deamination of GMP to IMP. It functions in the conversion of nucleobase, nucleoside and nucleotide derivatives of G to A nucleotides, and in maintaining the intracellular balance of A and G nucleotides.</text>
</comment>
<comment type="catalytic activity">
    <reaction evidence="1">
        <text>IMP + NH4(+) + NADP(+) = GMP + NADPH + 2 H(+)</text>
        <dbReference type="Rhea" id="RHEA:17185"/>
        <dbReference type="ChEBI" id="CHEBI:15378"/>
        <dbReference type="ChEBI" id="CHEBI:28938"/>
        <dbReference type="ChEBI" id="CHEBI:57783"/>
        <dbReference type="ChEBI" id="CHEBI:58053"/>
        <dbReference type="ChEBI" id="CHEBI:58115"/>
        <dbReference type="ChEBI" id="CHEBI:58349"/>
        <dbReference type="EC" id="1.7.1.7"/>
    </reaction>
</comment>
<comment type="subunit">
    <text evidence="1">Homotetramer.</text>
</comment>
<comment type="similarity">
    <text evidence="1">Belongs to the IMPDH/GMPR family. GuaC type 1 subfamily.</text>
</comment>